<comment type="function">
    <text evidence="1">Involved in DNA repair and RecF pathway recombination.</text>
</comment>
<comment type="similarity">
    <text evidence="1">Belongs to the RecO family.</text>
</comment>
<gene>
    <name evidence="1" type="primary">recO</name>
    <name type="ordered locus">Dde_2035</name>
</gene>
<evidence type="ECO:0000255" key="1">
    <source>
        <dbReference type="HAMAP-Rule" id="MF_00201"/>
    </source>
</evidence>
<protein>
    <recommendedName>
        <fullName evidence="1">DNA repair protein RecO</fullName>
    </recommendedName>
    <alternativeName>
        <fullName evidence="1">Recombination protein O</fullName>
    </alternativeName>
</protein>
<sequence>MDFTEKALVLRTGRFREADLWVRFLSPSRGVITAFAFGGCRSRRRFCGCLDALNHVLVKVSSDKRRTYLCLDEGTLLNGPVRLRSDWGRTGVAANCIKFVEAMGVGPEGAADAYDLTCGMLELLETADVVPEIFPVLFRGRLAFDQGYRIDPVRCARCGMRLKDVAGVRFLPREGVFECSAHGGASGGGFMMSAETLDAVRFVQENPPLMWTDIPLSPEGWKQWGRAVDAFIQYHVGLVWDKGRFRRI</sequence>
<keyword id="KW-0227">DNA damage</keyword>
<keyword id="KW-0233">DNA recombination</keyword>
<keyword id="KW-0234">DNA repair</keyword>
<keyword id="KW-1185">Reference proteome</keyword>
<organism>
    <name type="scientific">Oleidesulfovibrio alaskensis (strain ATCC BAA-1058 / DSM 17464 / G20)</name>
    <name type="common">Desulfovibrio alaskensis</name>
    <dbReference type="NCBI Taxonomy" id="207559"/>
    <lineage>
        <taxon>Bacteria</taxon>
        <taxon>Pseudomonadati</taxon>
        <taxon>Thermodesulfobacteriota</taxon>
        <taxon>Desulfovibrionia</taxon>
        <taxon>Desulfovibrionales</taxon>
        <taxon>Desulfovibrionaceae</taxon>
        <taxon>Oleidesulfovibrio</taxon>
    </lineage>
</organism>
<name>RECO_OLEA2</name>
<feature type="chain" id="PRO_1000193371" description="DNA repair protein RecO">
    <location>
        <begin position="1"/>
        <end position="248"/>
    </location>
</feature>
<accession>Q30ZR4</accession>
<proteinExistence type="inferred from homology"/>
<reference key="1">
    <citation type="journal article" date="2011" name="J. Bacteriol.">
        <title>Complete genome sequence and updated annotation of Desulfovibrio alaskensis G20.</title>
        <authorList>
            <person name="Hauser L.J."/>
            <person name="Land M.L."/>
            <person name="Brown S.D."/>
            <person name="Larimer F."/>
            <person name="Keller K.L."/>
            <person name="Rapp-Giles B.J."/>
            <person name="Price M.N."/>
            <person name="Lin M."/>
            <person name="Bruce D.C."/>
            <person name="Detter J.C."/>
            <person name="Tapia R."/>
            <person name="Han C.S."/>
            <person name="Goodwin L.A."/>
            <person name="Cheng J.F."/>
            <person name="Pitluck S."/>
            <person name="Copeland A."/>
            <person name="Lucas S."/>
            <person name="Nolan M."/>
            <person name="Lapidus A.L."/>
            <person name="Palumbo A.V."/>
            <person name="Wall J.D."/>
        </authorList>
    </citation>
    <scope>NUCLEOTIDE SEQUENCE [LARGE SCALE GENOMIC DNA]</scope>
    <source>
        <strain>ATCC BAA-1058 / DSM 17464 / G20</strain>
    </source>
</reference>
<dbReference type="EMBL" id="CP000112">
    <property type="protein sequence ID" value="ABB38832.1"/>
    <property type="molecule type" value="Genomic_DNA"/>
</dbReference>
<dbReference type="RefSeq" id="WP_011367937.1">
    <property type="nucleotide sequence ID" value="NC_007519.1"/>
</dbReference>
<dbReference type="SMR" id="Q30ZR4"/>
<dbReference type="STRING" id="207559.Dde_2035"/>
<dbReference type="KEGG" id="dde:Dde_2035"/>
<dbReference type="eggNOG" id="COG1381">
    <property type="taxonomic scope" value="Bacteria"/>
</dbReference>
<dbReference type="HOGENOM" id="CLU_066632_2_1_7"/>
<dbReference type="Proteomes" id="UP000002710">
    <property type="component" value="Chromosome"/>
</dbReference>
<dbReference type="GO" id="GO:0043590">
    <property type="term" value="C:bacterial nucleoid"/>
    <property type="evidence" value="ECO:0007669"/>
    <property type="project" value="TreeGrafter"/>
</dbReference>
<dbReference type="GO" id="GO:0006310">
    <property type="term" value="P:DNA recombination"/>
    <property type="evidence" value="ECO:0007669"/>
    <property type="project" value="UniProtKB-UniRule"/>
</dbReference>
<dbReference type="GO" id="GO:0006302">
    <property type="term" value="P:double-strand break repair"/>
    <property type="evidence" value="ECO:0007669"/>
    <property type="project" value="TreeGrafter"/>
</dbReference>
<dbReference type="Gene3D" id="2.40.50.140">
    <property type="entry name" value="Nucleic acid-binding proteins"/>
    <property type="match status" value="1"/>
</dbReference>
<dbReference type="Gene3D" id="1.20.1440.120">
    <property type="entry name" value="Recombination protein O, C-terminal domain"/>
    <property type="match status" value="1"/>
</dbReference>
<dbReference type="HAMAP" id="MF_00201">
    <property type="entry name" value="RecO"/>
    <property type="match status" value="1"/>
</dbReference>
<dbReference type="InterPro" id="IPR037278">
    <property type="entry name" value="ARFGAP/RecO"/>
</dbReference>
<dbReference type="InterPro" id="IPR022572">
    <property type="entry name" value="DNA_rep/recomb_RecO_N"/>
</dbReference>
<dbReference type="InterPro" id="IPR012340">
    <property type="entry name" value="NA-bd_OB-fold"/>
</dbReference>
<dbReference type="InterPro" id="IPR003717">
    <property type="entry name" value="RecO"/>
</dbReference>
<dbReference type="InterPro" id="IPR042242">
    <property type="entry name" value="RecO_C"/>
</dbReference>
<dbReference type="PANTHER" id="PTHR33991">
    <property type="entry name" value="DNA REPAIR PROTEIN RECO"/>
    <property type="match status" value="1"/>
</dbReference>
<dbReference type="PANTHER" id="PTHR33991:SF1">
    <property type="entry name" value="DNA REPAIR PROTEIN RECO"/>
    <property type="match status" value="1"/>
</dbReference>
<dbReference type="Pfam" id="PF02565">
    <property type="entry name" value="RecO_C"/>
    <property type="match status" value="1"/>
</dbReference>
<dbReference type="Pfam" id="PF11967">
    <property type="entry name" value="RecO_N"/>
    <property type="match status" value="1"/>
</dbReference>
<dbReference type="SUPFAM" id="SSF57863">
    <property type="entry name" value="ArfGap/RecO-like zinc finger"/>
    <property type="match status" value="1"/>
</dbReference>
<dbReference type="SUPFAM" id="SSF50249">
    <property type="entry name" value="Nucleic acid-binding proteins"/>
    <property type="match status" value="1"/>
</dbReference>